<proteinExistence type="inferred from homology"/>
<feature type="chain" id="PRO_1000184782" description="ATP synthase subunit delta">
    <location>
        <begin position="1"/>
        <end position="186"/>
    </location>
</feature>
<keyword id="KW-0066">ATP synthesis</keyword>
<keyword id="KW-0997">Cell inner membrane</keyword>
<keyword id="KW-1003">Cell membrane</keyword>
<keyword id="KW-0139">CF(1)</keyword>
<keyword id="KW-0375">Hydrogen ion transport</keyword>
<keyword id="KW-0406">Ion transport</keyword>
<keyword id="KW-0472">Membrane</keyword>
<keyword id="KW-0813">Transport</keyword>
<sequence>MASEDPSVSGVSGRYATALFELARDEKSIDAVTADLDKFSAMLAGSPDLVRLVRSPVFASEVQGKALAAVLDKAGITGISANFLKVLAANRRLFVVADVIRAYRALVAKFKGEATADVTVAEKLSDKNLEALKAALKSVTGKDVALNINVDPAIIGGLVVKLGSRMVDSSLRTKLNSIKHAMKEAG</sequence>
<accession>B3Q748</accession>
<reference key="1">
    <citation type="submission" date="2008-05" db="EMBL/GenBank/DDBJ databases">
        <title>Complete sequence of Rhodopseudomonas palustris TIE-1.</title>
        <authorList>
            <consortium name="US DOE Joint Genome Institute"/>
            <person name="Lucas S."/>
            <person name="Copeland A."/>
            <person name="Lapidus A."/>
            <person name="Glavina del Rio T."/>
            <person name="Dalin E."/>
            <person name="Tice H."/>
            <person name="Pitluck S."/>
            <person name="Chain P."/>
            <person name="Malfatti S."/>
            <person name="Shin M."/>
            <person name="Vergez L."/>
            <person name="Lang D."/>
            <person name="Schmutz J."/>
            <person name="Larimer F."/>
            <person name="Land M."/>
            <person name="Hauser L."/>
            <person name="Kyrpides N."/>
            <person name="Mikhailova N."/>
            <person name="Emerson D."/>
            <person name="Newman D.K."/>
            <person name="Roden E."/>
            <person name="Richardson P."/>
        </authorList>
    </citation>
    <scope>NUCLEOTIDE SEQUENCE [LARGE SCALE GENOMIC DNA]</scope>
    <source>
        <strain>TIE-1</strain>
    </source>
</reference>
<comment type="function">
    <text evidence="1">F(1)F(0) ATP synthase produces ATP from ADP in the presence of a proton or sodium gradient. F-type ATPases consist of two structural domains, F(1) containing the extramembraneous catalytic core and F(0) containing the membrane proton channel, linked together by a central stalk and a peripheral stalk. During catalysis, ATP synthesis in the catalytic domain of F(1) is coupled via a rotary mechanism of the central stalk subunits to proton translocation.</text>
</comment>
<comment type="function">
    <text evidence="1">This protein is part of the stalk that links CF(0) to CF(1). It either transmits conformational changes from CF(0) to CF(1) or is implicated in proton conduction.</text>
</comment>
<comment type="subunit">
    <text evidence="1">F-type ATPases have 2 components, F(1) - the catalytic core - and F(0) - the membrane proton channel. F(1) has five subunits: alpha(3), beta(3), gamma(1), delta(1), epsilon(1). CF(0) has four main subunits: a(1), b(1), b'(1) and c(10-14). The alpha and beta chains form an alternating ring which encloses part of the gamma chain. F(1) is attached to F(0) by a central stalk formed by the gamma and epsilon chains, while a peripheral stalk is formed by the delta, b and b' chains.</text>
</comment>
<comment type="subcellular location">
    <subcellularLocation>
        <location evidence="1">Cell inner membrane</location>
        <topology evidence="1">Peripheral membrane protein</topology>
    </subcellularLocation>
</comment>
<comment type="similarity">
    <text evidence="1">Belongs to the ATPase delta chain family.</text>
</comment>
<organism>
    <name type="scientific">Rhodopseudomonas palustris (strain TIE-1)</name>
    <dbReference type="NCBI Taxonomy" id="395960"/>
    <lineage>
        <taxon>Bacteria</taxon>
        <taxon>Pseudomonadati</taxon>
        <taxon>Pseudomonadota</taxon>
        <taxon>Alphaproteobacteria</taxon>
        <taxon>Hyphomicrobiales</taxon>
        <taxon>Nitrobacteraceae</taxon>
        <taxon>Rhodopseudomonas</taxon>
    </lineage>
</organism>
<gene>
    <name evidence="1" type="primary">atpH</name>
    <name type="ordered locus">Rpal_0174</name>
</gene>
<evidence type="ECO:0000255" key="1">
    <source>
        <dbReference type="HAMAP-Rule" id="MF_01416"/>
    </source>
</evidence>
<dbReference type="EMBL" id="CP001096">
    <property type="protein sequence ID" value="ACE98736.1"/>
    <property type="molecule type" value="Genomic_DNA"/>
</dbReference>
<dbReference type="RefSeq" id="WP_011155747.1">
    <property type="nucleotide sequence ID" value="NC_011004.1"/>
</dbReference>
<dbReference type="SMR" id="B3Q748"/>
<dbReference type="KEGG" id="rpt:Rpal_0174"/>
<dbReference type="HOGENOM" id="CLU_085114_0_1_5"/>
<dbReference type="OrthoDB" id="9796185at2"/>
<dbReference type="Proteomes" id="UP000001725">
    <property type="component" value="Chromosome"/>
</dbReference>
<dbReference type="GO" id="GO:0005886">
    <property type="term" value="C:plasma membrane"/>
    <property type="evidence" value="ECO:0007669"/>
    <property type="project" value="UniProtKB-SubCell"/>
</dbReference>
<dbReference type="GO" id="GO:0045259">
    <property type="term" value="C:proton-transporting ATP synthase complex"/>
    <property type="evidence" value="ECO:0007669"/>
    <property type="project" value="UniProtKB-KW"/>
</dbReference>
<dbReference type="GO" id="GO:0046933">
    <property type="term" value="F:proton-transporting ATP synthase activity, rotational mechanism"/>
    <property type="evidence" value="ECO:0007669"/>
    <property type="project" value="UniProtKB-UniRule"/>
</dbReference>
<dbReference type="Gene3D" id="1.10.520.20">
    <property type="entry name" value="N-terminal domain of the delta subunit of the F1F0-ATP synthase"/>
    <property type="match status" value="1"/>
</dbReference>
<dbReference type="HAMAP" id="MF_01416">
    <property type="entry name" value="ATP_synth_delta_bact"/>
    <property type="match status" value="1"/>
</dbReference>
<dbReference type="InterPro" id="IPR026015">
    <property type="entry name" value="ATP_synth_OSCP/delta_N_sf"/>
</dbReference>
<dbReference type="InterPro" id="IPR020781">
    <property type="entry name" value="ATPase_OSCP/d_CS"/>
</dbReference>
<dbReference type="InterPro" id="IPR000711">
    <property type="entry name" value="ATPase_OSCP/dsu"/>
</dbReference>
<dbReference type="NCBIfam" id="TIGR01145">
    <property type="entry name" value="ATP_synt_delta"/>
    <property type="match status" value="1"/>
</dbReference>
<dbReference type="NCBIfam" id="NF004406">
    <property type="entry name" value="PRK05758.3-2"/>
    <property type="match status" value="1"/>
</dbReference>
<dbReference type="PANTHER" id="PTHR11910">
    <property type="entry name" value="ATP SYNTHASE DELTA CHAIN"/>
    <property type="match status" value="1"/>
</dbReference>
<dbReference type="Pfam" id="PF00213">
    <property type="entry name" value="OSCP"/>
    <property type="match status" value="1"/>
</dbReference>
<dbReference type="PRINTS" id="PR00125">
    <property type="entry name" value="ATPASEDELTA"/>
</dbReference>
<dbReference type="SUPFAM" id="SSF47928">
    <property type="entry name" value="N-terminal domain of the delta subunit of the F1F0-ATP synthase"/>
    <property type="match status" value="1"/>
</dbReference>
<dbReference type="PROSITE" id="PS00389">
    <property type="entry name" value="ATPASE_DELTA"/>
    <property type="match status" value="1"/>
</dbReference>
<protein>
    <recommendedName>
        <fullName evidence="1">ATP synthase subunit delta</fullName>
    </recommendedName>
    <alternativeName>
        <fullName evidence="1">ATP synthase F(1) sector subunit delta</fullName>
    </alternativeName>
    <alternativeName>
        <fullName evidence="1">F-type ATPase subunit delta</fullName>
        <shortName evidence="1">F-ATPase subunit delta</shortName>
    </alternativeName>
</protein>
<name>ATPD_RHOPT</name>